<evidence type="ECO:0000255" key="1">
    <source>
        <dbReference type="HAMAP-Rule" id="MF_00184"/>
    </source>
</evidence>
<evidence type="ECO:0000255" key="2">
    <source>
        <dbReference type="PROSITE-ProRule" id="PRU01228"/>
    </source>
</evidence>
<dbReference type="EC" id="6.1.1.3" evidence="1"/>
<dbReference type="EMBL" id="BA000016">
    <property type="protein sequence ID" value="BAB82028.1"/>
    <property type="molecule type" value="Genomic_DNA"/>
</dbReference>
<dbReference type="RefSeq" id="WP_003457830.1">
    <property type="nucleotide sequence ID" value="NC_003366.1"/>
</dbReference>
<dbReference type="SMR" id="Q8XI02"/>
<dbReference type="STRING" id="195102.gene:10491639"/>
<dbReference type="GeneID" id="93001091"/>
<dbReference type="KEGG" id="cpe:CPE2322"/>
<dbReference type="HOGENOM" id="CLU_008554_0_1_9"/>
<dbReference type="Proteomes" id="UP000000818">
    <property type="component" value="Chromosome"/>
</dbReference>
<dbReference type="GO" id="GO:0005737">
    <property type="term" value="C:cytoplasm"/>
    <property type="evidence" value="ECO:0007669"/>
    <property type="project" value="UniProtKB-SubCell"/>
</dbReference>
<dbReference type="GO" id="GO:0005524">
    <property type="term" value="F:ATP binding"/>
    <property type="evidence" value="ECO:0007669"/>
    <property type="project" value="UniProtKB-UniRule"/>
</dbReference>
<dbReference type="GO" id="GO:0140096">
    <property type="term" value="F:catalytic activity, acting on a protein"/>
    <property type="evidence" value="ECO:0007669"/>
    <property type="project" value="UniProtKB-ARBA"/>
</dbReference>
<dbReference type="GO" id="GO:0046872">
    <property type="term" value="F:metal ion binding"/>
    <property type="evidence" value="ECO:0007669"/>
    <property type="project" value="UniProtKB-KW"/>
</dbReference>
<dbReference type="GO" id="GO:0004829">
    <property type="term" value="F:threonine-tRNA ligase activity"/>
    <property type="evidence" value="ECO:0007669"/>
    <property type="project" value="UniProtKB-UniRule"/>
</dbReference>
<dbReference type="GO" id="GO:0016740">
    <property type="term" value="F:transferase activity"/>
    <property type="evidence" value="ECO:0007669"/>
    <property type="project" value="UniProtKB-ARBA"/>
</dbReference>
<dbReference type="GO" id="GO:0000049">
    <property type="term" value="F:tRNA binding"/>
    <property type="evidence" value="ECO:0007669"/>
    <property type="project" value="UniProtKB-KW"/>
</dbReference>
<dbReference type="GO" id="GO:0006435">
    <property type="term" value="P:threonyl-tRNA aminoacylation"/>
    <property type="evidence" value="ECO:0007669"/>
    <property type="project" value="UniProtKB-UniRule"/>
</dbReference>
<dbReference type="CDD" id="cd01667">
    <property type="entry name" value="TGS_ThrRS"/>
    <property type="match status" value="1"/>
</dbReference>
<dbReference type="CDD" id="cd00860">
    <property type="entry name" value="ThrRS_anticodon"/>
    <property type="match status" value="1"/>
</dbReference>
<dbReference type="CDD" id="cd00771">
    <property type="entry name" value="ThrRS_core"/>
    <property type="match status" value="1"/>
</dbReference>
<dbReference type="FunFam" id="3.30.54.20:FF:000002">
    <property type="entry name" value="Threonine--tRNA ligase"/>
    <property type="match status" value="1"/>
</dbReference>
<dbReference type="FunFam" id="3.30.930.10:FF:000002">
    <property type="entry name" value="Threonine--tRNA ligase"/>
    <property type="match status" value="1"/>
</dbReference>
<dbReference type="FunFam" id="3.40.50.800:FF:000001">
    <property type="entry name" value="Threonine--tRNA ligase"/>
    <property type="match status" value="1"/>
</dbReference>
<dbReference type="FunFam" id="3.30.980.10:FF:000005">
    <property type="entry name" value="Threonyl-tRNA synthetase, mitochondrial"/>
    <property type="match status" value="1"/>
</dbReference>
<dbReference type="Gene3D" id="3.10.20.30">
    <property type="match status" value="1"/>
</dbReference>
<dbReference type="Gene3D" id="3.40.50.800">
    <property type="entry name" value="Anticodon-binding domain"/>
    <property type="match status" value="1"/>
</dbReference>
<dbReference type="Gene3D" id="3.30.930.10">
    <property type="entry name" value="Bira Bifunctional Protein, Domain 2"/>
    <property type="match status" value="1"/>
</dbReference>
<dbReference type="Gene3D" id="3.30.980.10">
    <property type="entry name" value="Threonyl-trna Synthetase, Chain A, domain 2"/>
    <property type="match status" value="1"/>
</dbReference>
<dbReference type="HAMAP" id="MF_00184">
    <property type="entry name" value="Thr_tRNA_synth"/>
    <property type="match status" value="1"/>
</dbReference>
<dbReference type="InterPro" id="IPR002314">
    <property type="entry name" value="aa-tRNA-synt_IIb"/>
</dbReference>
<dbReference type="InterPro" id="IPR006195">
    <property type="entry name" value="aa-tRNA-synth_II"/>
</dbReference>
<dbReference type="InterPro" id="IPR045864">
    <property type="entry name" value="aa-tRNA-synth_II/BPL/LPL"/>
</dbReference>
<dbReference type="InterPro" id="IPR004154">
    <property type="entry name" value="Anticodon-bd"/>
</dbReference>
<dbReference type="InterPro" id="IPR036621">
    <property type="entry name" value="Anticodon-bd_dom_sf"/>
</dbReference>
<dbReference type="InterPro" id="IPR012675">
    <property type="entry name" value="Beta-grasp_dom_sf"/>
</dbReference>
<dbReference type="InterPro" id="IPR004095">
    <property type="entry name" value="TGS"/>
</dbReference>
<dbReference type="InterPro" id="IPR012676">
    <property type="entry name" value="TGS-like"/>
</dbReference>
<dbReference type="InterPro" id="IPR002320">
    <property type="entry name" value="Thr-tRNA-ligase_IIa"/>
</dbReference>
<dbReference type="InterPro" id="IPR018163">
    <property type="entry name" value="Thr/Ala-tRNA-synth_IIc_edit"/>
</dbReference>
<dbReference type="InterPro" id="IPR047246">
    <property type="entry name" value="ThrRS_anticodon"/>
</dbReference>
<dbReference type="InterPro" id="IPR033728">
    <property type="entry name" value="ThrRS_core"/>
</dbReference>
<dbReference type="InterPro" id="IPR012947">
    <property type="entry name" value="tRNA_SAD"/>
</dbReference>
<dbReference type="NCBIfam" id="TIGR00418">
    <property type="entry name" value="thrS"/>
    <property type="match status" value="1"/>
</dbReference>
<dbReference type="PANTHER" id="PTHR11451:SF56">
    <property type="entry name" value="THREONINE--TRNA LIGASE 1"/>
    <property type="match status" value="1"/>
</dbReference>
<dbReference type="PANTHER" id="PTHR11451">
    <property type="entry name" value="THREONINE-TRNA LIGASE"/>
    <property type="match status" value="1"/>
</dbReference>
<dbReference type="Pfam" id="PF03129">
    <property type="entry name" value="HGTP_anticodon"/>
    <property type="match status" value="1"/>
</dbReference>
<dbReference type="Pfam" id="PF02824">
    <property type="entry name" value="TGS"/>
    <property type="match status" value="1"/>
</dbReference>
<dbReference type="Pfam" id="PF00587">
    <property type="entry name" value="tRNA-synt_2b"/>
    <property type="match status" value="1"/>
</dbReference>
<dbReference type="Pfam" id="PF07973">
    <property type="entry name" value="tRNA_SAD"/>
    <property type="match status" value="1"/>
</dbReference>
<dbReference type="PRINTS" id="PR01047">
    <property type="entry name" value="TRNASYNTHTHR"/>
</dbReference>
<dbReference type="SMART" id="SM00863">
    <property type="entry name" value="tRNA_SAD"/>
    <property type="match status" value="1"/>
</dbReference>
<dbReference type="SUPFAM" id="SSF52954">
    <property type="entry name" value="Class II aaRS ABD-related"/>
    <property type="match status" value="1"/>
</dbReference>
<dbReference type="SUPFAM" id="SSF55681">
    <property type="entry name" value="Class II aaRS and biotin synthetases"/>
    <property type="match status" value="1"/>
</dbReference>
<dbReference type="SUPFAM" id="SSF81271">
    <property type="entry name" value="TGS-like"/>
    <property type="match status" value="1"/>
</dbReference>
<dbReference type="SUPFAM" id="SSF55186">
    <property type="entry name" value="ThrRS/AlaRS common domain"/>
    <property type="match status" value="1"/>
</dbReference>
<dbReference type="PROSITE" id="PS50862">
    <property type="entry name" value="AA_TRNA_LIGASE_II"/>
    <property type="match status" value="1"/>
</dbReference>
<dbReference type="PROSITE" id="PS51880">
    <property type="entry name" value="TGS"/>
    <property type="match status" value="1"/>
</dbReference>
<feature type="chain" id="PRO_0000100966" description="Threonine--tRNA ligase">
    <location>
        <begin position="1"/>
        <end position="643"/>
    </location>
</feature>
<feature type="domain" description="TGS" evidence="2">
    <location>
        <begin position="1"/>
        <end position="61"/>
    </location>
</feature>
<feature type="region of interest" description="Catalytic" evidence="1">
    <location>
        <begin position="240"/>
        <end position="540"/>
    </location>
</feature>
<feature type="binding site" evidence="1">
    <location>
        <position position="335"/>
    </location>
    <ligand>
        <name>Zn(2+)</name>
        <dbReference type="ChEBI" id="CHEBI:29105"/>
    </ligand>
</feature>
<feature type="binding site" evidence="1">
    <location>
        <position position="386"/>
    </location>
    <ligand>
        <name>Zn(2+)</name>
        <dbReference type="ChEBI" id="CHEBI:29105"/>
    </ligand>
</feature>
<feature type="binding site" evidence="1">
    <location>
        <position position="517"/>
    </location>
    <ligand>
        <name>Zn(2+)</name>
        <dbReference type="ChEBI" id="CHEBI:29105"/>
    </ligand>
</feature>
<gene>
    <name evidence="1" type="primary">thrS</name>
    <name type="ordered locus">CPE2322</name>
</gene>
<sequence length="643" mass="73677">MIKITLKDGSIKEVEAGLSIFEIAQSISQGLARNACCGILNGKVEDLRFIVNEDSSLEICTFDSKEGQHAFNHTASHVLAAAVKRLFPQDKLAIGPSIDNGFYYDFDTEKPFSADQLNKLEEEMKKIIKENPEIKRFELPRNEALELMKDEPYKVELINDLPEGEVISFYQIGDFVDLCAGPHLMAVKPIKAVKLLRSTGAYWKGDEKNKMLSRVYGTAFPKKSELDAYLEALEEAKKRDHNKLGRELGIFTTDENVGQGLPLLMPKGARIIQTLQRWIEDEEQRRGYVLTKTPLMAKSDLYKISGHWDHYKDGMFVLGDEEKDSEVFALRPMTCPFQYAIYNSTQHSYRDLPVRFAETSTLFRNESSGEMHGLIRVRQFTLADGHIVCTPEQLEDEFKNTVDLVKYVMETLGIADDITYRFSKWDPNNTEKYINDPEAWENTQNIMREILNHLNIDFTEADDEAAFYGPKLDIQFKNVHGKEDTIITIQIDFALAERFGMYYIDKDGEKKRPYIIHRSSIGCYERTLAMLIEKYAGALPTWIAPVQAKVLPLSDKYADYANEVVEELRRRGVRVEADHRAEKIGYKIREARLERTPYILVVGEKEAENKEVSVRSRKNGEEGAMPLADFVNRIVLEIANREN</sequence>
<name>SYT_CLOPE</name>
<proteinExistence type="inferred from homology"/>
<accession>Q8XI02</accession>
<organism>
    <name type="scientific">Clostridium perfringens (strain 13 / Type A)</name>
    <dbReference type="NCBI Taxonomy" id="195102"/>
    <lineage>
        <taxon>Bacteria</taxon>
        <taxon>Bacillati</taxon>
        <taxon>Bacillota</taxon>
        <taxon>Clostridia</taxon>
        <taxon>Eubacteriales</taxon>
        <taxon>Clostridiaceae</taxon>
        <taxon>Clostridium</taxon>
    </lineage>
</organism>
<reference key="1">
    <citation type="journal article" date="2002" name="Proc. Natl. Acad. Sci. U.S.A.">
        <title>Complete genome sequence of Clostridium perfringens, an anaerobic flesh-eater.</title>
        <authorList>
            <person name="Shimizu T."/>
            <person name="Ohtani K."/>
            <person name="Hirakawa H."/>
            <person name="Ohshima K."/>
            <person name="Yamashita A."/>
            <person name="Shiba T."/>
            <person name="Ogasawara N."/>
            <person name="Hattori M."/>
            <person name="Kuhara S."/>
            <person name="Hayashi H."/>
        </authorList>
    </citation>
    <scope>NUCLEOTIDE SEQUENCE [LARGE SCALE GENOMIC DNA]</scope>
    <source>
        <strain>13 / Type A</strain>
    </source>
</reference>
<protein>
    <recommendedName>
        <fullName evidence="1">Threonine--tRNA ligase</fullName>
        <ecNumber evidence="1">6.1.1.3</ecNumber>
    </recommendedName>
    <alternativeName>
        <fullName evidence="1">Threonyl-tRNA synthetase</fullName>
        <shortName evidence="1">ThrRS</shortName>
    </alternativeName>
</protein>
<comment type="function">
    <text evidence="1">Catalyzes the attachment of threonine to tRNA(Thr) in a two-step reaction: L-threonine is first activated by ATP to form Thr-AMP and then transferred to the acceptor end of tRNA(Thr). Also edits incorrectly charged L-seryl-tRNA(Thr).</text>
</comment>
<comment type="catalytic activity">
    <reaction evidence="1">
        <text>tRNA(Thr) + L-threonine + ATP = L-threonyl-tRNA(Thr) + AMP + diphosphate + H(+)</text>
        <dbReference type="Rhea" id="RHEA:24624"/>
        <dbReference type="Rhea" id="RHEA-COMP:9670"/>
        <dbReference type="Rhea" id="RHEA-COMP:9704"/>
        <dbReference type="ChEBI" id="CHEBI:15378"/>
        <dbReference type="ChEBI" id="CHEBI:30616"/>
        <dbReference type="ChEBI" id="CHEBI:33019"/>
        <dbReference type="ChEBI" id="CHEBI:57926"/>
        <dbReference type="ChEBI" id="CHEBI:78442"/>
        <dbReference type="ChEBI" id="CHEBI:78534"/>
        <dbReference type="ChEBI" id="CHEBI:456215"/>
        <dbReference type="EC" id="6.1.1.3"/>
    </reaction>
</comment>
<comment type="cofactor">
    <cofactor evidence="1">
        <name>Zn(2+)</name>
        <dbReference type="ChEBI" id="CHEBI:29105"/>
    </cofactor>
    <text evidence="1">Binds 1 zinc ion per subunit.</text>
</comment>
<comment type="subunit">
    <text evidence="1">Homodimer.</text>
</comment>
<comment type="subcellular location">
    <subcellularLocation>
        <location evidence="1">Cytoplasm</location>
    </subcellularLocation>
</comment>
<comment type="similarity">
    <text evidence="1">Belongs to the class-II aminoacyl-tRNA synthetase family.</text>
</comment>
<keyword id="KW-0030">Aminoacyl-tRNA synthetase</keyword>
<keyword id="KW-0067">ATP-binding</keyword>
<keyword id="KW-0963">Cytoplasm</keyword>
<keyword id="KW-0436">Ligase</keyword>
<keyword id="KW-0479">Metal-binding</keyword>
<keyword id="KW-0547">Nucleotide-binding</keyword>
<keyword id="KW-0648">Protein biosynthesis</keyword>
<keyword id="KW-1185">Reference proteome</keyword>
<keyword id="KW-0694">RNA-binding</keyword>
<keyword id="KW-0820">tRNA-binding</keyword>
<keyword id="KW-0862">Zinc</keyword>